<accession>O74192</accession>
<organism>
    <name type="scientific">Komagataella pastoris</name>
    <name type="common">Yeast</name>
    <name type="synonym">Pichia pastoris</name>
    <dbReference type="NCBI Taxonomy" id="4922"/>
    <lineage>
        <taxon>Eukaryota</taxon>
        <taxon>Fungi</taxon>
        <taxon>Dikarya</taxon>
        <taxon>Ascomycota</taxon>
        <taxon>Saccharomycotina</taxon>
        <taxon>Pichiomycetes</taxon>
        <taxon>Pichiales</taxon>
        <taxon>Pichiaceae</taxon>
        <taxon>Komagataella</taxon>
    </lineage>
</organism>
<feature type="chain" id="PRO_0000121519" description="Dihydroxyacetone kinase">
    <location>
        <begin position="1"/>
        <end position="608"/>
    </location>
</feature>
<feature type="domain" description="DhaK" evidence="3">
    <location>
        <begin position="8"/>
        <end position="357"/>
    </location>
</feature>
<feature type="domain" description="DhaL" evidence="2">
    <location>
        <begin position="392"/>
        <end position="599"/>
    </location>
</feature>
<feature type="active site" description="Tele-hemiaminal-histidine intermediate" evidence="3">
    <location>
        <position position="234"/>
    </location>
</feature>
<feature type="binding site" evidence="1">
    <location>
        <begin position="53"/>
        <end position="56"/>
    </location>
    <ligand>
        <name>substrate</name>
    </ligand>
</feature>
<feature type="binding site" evidence="1">
    <location>
        <position position="105"/>
    </location>
    <ligand>
        <name>substrate</name>
    </ligand>
</feature>
<feature type="binding site" evidence="1">
    <location>
        <position position="110"/>
    </location>
    <ligand>
        <name>substrate</name>
    </ligand>
</feature>
<feature type="binding site" evidence="1">
    <location>
        <begin position="421"/>
        <end position="424"/>
    </location>
    <ligand>
        <name>ATP</name>
        <dbReference type="ChEBI" id="CHEBI:30616"/>
    </ligand>
</feature>
<feature type="binding site" evidence="1">
    <location>
        <begin position="467"/>
        <end position="468"/>
    </location>
    <ligand>
        <name>ATP</name>
        <dbReference type="ChEBI" id="CHEBI:30616"/>
    </ligand>
</feature>
<feature type="binding site" evidence="1">
    <location>
        <begin position="523"/>
        <end position="524"/>
    </location>
    <ligand>
        <name>ATP</name>
        <dbReference type="ChEBI" id="CHEBI:30616"/>
    </ligand>
</feature>
<feature type="binding site" evidence="1">
    <location>
        <begin position="584"/>
        <end position="586"/>
    </location>
    <ligand>
        <name>ATP</name>
        <dbReference type="ChEBI" id="CHEBI:30616"/>
    </ligand>
</feature>
<proteinExistence type="inferred from homology"/>
<sequence length="608" mass="65312">MSSKHWDYKKDLVLSHLAGLCQSNPHVRLIESERVVISAENQEDKITLISGGGSGHEPLHAGFVTKDGLLDAAVAGFIFASPSTKQIFSAIKAKPSKKGTLIIVKNYTGDILHFGLAAEKAKAEGLNAELLIVQDDVSVGKAKNGLVGRRGLAGTSLVHKILGAKAYLQKDNLELHQLVTFGEKVVANLVTIGASLDHVTIPARANKQEEDDSDDEHGYEVLKHDEFEIGMGIHNEPGIKKSSPIPTVDELVAELLEYLLSTTDKDRNYVQFDKNDEVVLLINNLGGTSVLELYAIQNIVVDQLASKYSIKPVRIFTGTFTTSLDGPGFSITLLNATKTGDKDILKFLDHKTSAPGWNSNISDWSGRVDNFIVAAPEIDEGDSSSKVSVDAKLYADLLESGVKKVISKEPKITLYDTVAGDGDCGETLANGSNAILKALAEGKLDLKDGVKSLVQITDIVETAMGGTSGGLYSIFISALAKSLKEKELSEGAYTLTLETISGSLQAALQSLFKYTRARTGDRTLIDALEPFVKEFAKSKDLKLANKAAHDGAEATRKLEAKFGRASYVAEEEFKQFESEGGLPDPGAIGLAALISGITDAYFKSETKL</sequence>
<comment type="function">
    <text evidence="1">Catalyzes both the phosphorylation of dihydroxyacetone and of glyceraldehyde.</text>
</comment>
<comment type="catalytic activity">
    <reaction>
        <text>dihydroxyacetone + ATP = dihydroxyacetone phosphate + ADP + H(+)</text>
        <dbReference type="Rhea" id="RHEA:15773"/>
        <dbReference type="ChEBI" id="CHEBI:15378"/>
        <dbReference type="ChEBI" id="CHEBI:16016"/>
        <dbReference type="ChEBI" id="CHEBI:30616"/>
        <dbReference type="ChEBI" id="CHEBI:57642"/>
        <dbReference type="ChEBI" id="CHEBI:456216"/>
        <dbReference type="EC" id="2.7.1.29"/>
    </reaction>
</comment>
<comment type="catalytic activity">
    <reaction>
        <text>D-glyceraldehyde + ATP = D-glyceraldehyde 3-phosphate + ADP + H(+)</text>
        <dbReference type="Rhea" id="RHEA:13941"/>
        <dbReference type="ChEBI" id="CHEBI:15378"/>
        <dbReference type="ChEBI" id="CHEBI:17378"/>
        <dbReference type="ChEBI" id="CHEBI:30616"/>
        <dbReference type="ChEBI" id="CHEBI:59776"/>
        <dbReference type="ChEBI" id="CHEBI:456216"/>
        <dbReference type="EC" id="2.7.1.28"/>
    </reaction>
</comment>
<comment type="pathway">
    <text>Polyol metabolism; glycerol fermentation; glycerone phosphate from glycerol (oxidative route): step 2/2.</text>
</comment>
<comment type="subcellular location">
    <subcellularLocation>
        <location>Cytoplasm</location>
    </subcellularLocation>
</comment>
<comment type="similarity">
    <text evidence="4">Belongs to the dihydroxyacetone kinase (DAK) family.</text>
</comment>
<evidence type="ECO:0000250" key="1"/>
<evidence type="ECO:0000255" key="2">
    <source>
        <dbReference type="PROSITE-ProRule" id="PRU00813"/>
    </source>
</evidence>
<evidence type="ECO:0000255" key="3">
    <source>
        <dbReference type="PROSITE-ProRule" id="PRU00814"/>
    </source>
</evidence>
<evidence type="ECO:0000305" key="4"/>
<dbReference type="EC" id="2.7.1.28"/>
<dbReference type="EC" id="2.7.1.29"/>
<dbReference type="EMBL" id="AF019198">
    <property type="protein sequence ID" value="AAC39490.1"/>
    <property type="molecule type" value="Genomic_DNA"/>
</dbReference>
<dbReference type="SMR" id="O74192"/>
<dbReference type="BRENDA" id="2.7.1.29">
    <property type="organism ID" value="4827"/>
</dbReference>
<dbReference type="UniPathway" id="UPA00617">
    <property type="reaction ID" value="UER00669"/>
</dbReference>
<dbReference type="GO" id="GO:0005829">
    <property type="term" value="C:cytosol"/>
    <property type="evidence" value="ECO:0007669"/>
    <property type="project" value="TreeGrafter"/>
</dbReference>
<dbReference type="GO" id="GO:0005524">
    <property type="term" value="F:ATP binding"/>
    <property type="evidence" value="ECO:0007669"/>
    <property type="project" value="UniProtKB-KW"/>
</dbReference>
<dbReference type="GO" id="GO:0004371">
    <property type="term" value="F:glycerone kinase activity"/>
    <property type="evidence" value="ECO:0007669"/>
    <property type="project" value="UniProtKB-EC"/>
</dbReference>
<dbReference type="GO" id="GO:0050354">
    <property type="term" value="F:triokinase activity"/>
    <property type="evidence" value="ECO:0007669"/>
    <property type="project" value="UniProtKB-EC"/>
</dbReference>
<dbReference type="GO" id="GO:0019588">
    <property type="term" value="P:anaerobic glycerol catabolic process"/>
    <property type="evidence" value="ECO:0007669"/>
    <property type="project" value="UniProtKB-UniPathway"/>
</dbReference>
<dbReference type="FunFam" id="1.25.40.340:FF:000001">
    <property type="entry name" value="Dihydroxyacetone kinase 1"/>
    <property type="match status" value="1"/>
</dbReference>
<dbReference type="FunFam" id="3.30.1180.20:FF:000001">
    <property type="entry name" value="Dihydroxyacetone kinase 1"/>
    <property type="match status" value="1"/>
</dbReference>
<dbReference type="FunFam" id="3.40.50.10440:FF:000001">
    <property type="entry name" value="Dihydroxyacetone kinase, DhaK subunit"/>
    <property type="match status" value="1"/>
</dbReference>
<dbReference type="Gene3D" id="1.25.40.340">
    <property type="match status" value="1"/>
</dbReference>
<dbReference type="Gene3D" id="3.40.50.10440">
    <property type="entry name" value="Dihydroxyacetone kinase, domain 1"/>
    <property type="match status" value="1"/>
</dbReference>
<dbReference type="Gene3D" id="3.30.1180.20">
    <property type="entry name" value="Dihydroxyacetone kinase, domain 2"/>
    <property type="match status" value="1"/>
</dbReference>
<dbReference type="InterPro" id="IPR012734">
    <property type="entry name" value="DhaK_ATP"/>
</dbReference>
<dbReference type="InterPro" id="IPR004006">
    <property type="entry name" value="DhaK_dom"/>
</dbReference>
<dbReference type="InterPro" id="IPR004007">
    <property type="entry name" value="DhaL_dom"/>
</dbReference>
<dbReference type="InterPro" id="IPR036117">
    <property type="entry name" value="DhaL_dom_sf"/>
</dbReference>
<dbReference type="InterPro" id="IPR050861">
    <property type="entry name" value="Dihydroxyacetone_Kinase"/>
</dbReference>
<dbReference type="NCBIfam" id="TIGR02361">
    <property type="entry name" value="dak_ATP"/>
    <property type="match status" value="1"/>
</dbReference>
<dbReference type="PANTHER" id="PTHR28629">
    <property type="entry name" value="TRIOKINASE/FMN CYCLASE"/>
    <property type="match status" value="1"/>
</dbReference>
<dbReference type="PANTHER" id="PTHR28629:SF4">
    <property type="entry name" value="TRIOKINASE_FMN CYCLASE"/>
    <property type="match status" value="1"/>
</dbReference>
<dbReference type="Pfam" id="PF02733">
    <property type="entry name" value="Dak1"/>
    <property type="match status" value="1"/>
</dbReference>
<dbReference type="Pfam" id="PF02734">
    <property type="entry name" value="Dak2"/>
    <property type="match status" value="1"/>
</dbReference>
<dbReference type="SMART" id="SM01120">
    <property type="entry name" value="Dak2"/>
    <property type="match status" value="1"/>
</dbReference>
<dbReference type="SUPFAM" id="SSF82549">
    <property type="entry name" value="DAK1/DegV-like"/>
    <property type="match status" value="1"/>
</dbReference>
<dbReference type="SUPFAM" id="SSF101473">
    <property type="entry name" value="DhaL-like"/>
    <property type="match status" value="1"/>
</dbReference>
<dbReference type="PROSITE" id="PS51481">
    <property type="entry name" value="DHAK"/>
    <property type="match status" value="1"/>
</dbReference>
<dbReference type="PROSITE" id="PS51480">
    <property type="entry name" value="DHAL"/>
    <property type="match status" value="1"/>
</dbReference>
<gene>
    <name type="primary">DAK</name>
</gene>
<reference key="1">
    <citation type="journal article" date="1998" name="Yeast">
        <title>The Pichia pastoris dihydroxyacetone kinase is a PTS1-containing, but cytosolic, protein that is essential for growth on methanol.</title>
        <authorList>
            <person name="Luers G.H."/>
            <person name="Advani R."/>
            <person name="Wenzel T."/>
            <person name="Subramani S."/>
        </authorList>
    </citation>
    <scope>NUCLEOTIDE SEQUENCE [GENOMIC DNA]</scope>
</reference>
<protein>
    <recommendedName>
        <fullName>Dihydroxyacetone kinase</fullName>
        <shortName>DHA kinase</shortName>
        <ecNumber>2.7.1.28</ecNumber>
        <ecNumber>2.7.1.29</ecNumber>
    </recommendedName>
    <alternativeName>
        <fullName>Glycerone kinase</fullName>
    </alternativeName>
    <alternativeName>
        <fullName>Triokinase</fullName>
    </alternativeName>
    <alternativeName>
        <fullName>Triose kinase</fullName>
    </alternativeName>
</protein>
<keyword id="KW-0067">ATP-binding</keyword>
<keyword id="KW-0963">Cytoplasm</keyword>
<keyword id="KW-0319">Glycerol metabolism</keyword>
<keyword id="KW-0418">Kinase</keyword>
<keyword id="KW-0547">Nucleotide-binding</keyword>
<keyword id="KW-0808">Transferase</keyword>
<name>DAK_PICPA</name>